<name>KTRC_AREMA</name>
<sequence>LGYLGTCPTNIGTGLR</sequence>
<reference key="1">
    <citation type="journal article" date="1975" name="Biochim. Biophys. Acta">
        <title>Comparative structural studies of the active site of ATP: guanidine phosphotransferases. The essential cysteine tryptic peptide of taurocyamine kinase from Arenicola marina.</title>
        <authorList>
            <person name="Brevet A."/>
            <person name="Zeitoun Y."/>
            <person name="Pradel L.A."/>
        </authorList>
    </citation>
    <scope>PROTEIN SEQUENCE</scope>
</reference>
<evidence type="ECO:0000255" key="1">
    <source>
        <dbReference type="PROSITE-ProRule" id="PRU00843"/>
    </source>
</evidence>
<protein>
    <recommendedName>
        <fullName>Taurocyamine kinase</fullName>
        <ecNumber>2.7.3.4</ecNumber>
    </recommendedName>
</protein>
<feature type="chain" id="PRO_0000211987" description="Taurocyamine kinase">
    <location>
        <begin position="1" status="less than"/>
        <end position="16" status="greater than"/>
    </location>
</feature>
<feature type="domain" description="Phosphagen kinase C-terminal" evidence="1">
    <location>
        <begin position="1" status="less than"/>
        <end position="16" status="greater than"/>
    </location>
</feature>
<feature type="non-terminal residue">
    <location>
        <position position="1"/>
    </location>
</feature>
<feature type="non-terminal residue">
    <location>
        <position position="16"/>
    </location>
</feature>
<dbReference type="EC" id="2.7.3.4"/>
<dbReference type="PIR" id="A11488">
    <property type="entry name" value="A11488"/>
</dbReference>
<dbReference type="GO" id="GO:0005524">
    <property type="term" value="F:ATP binding"/>
    <property type="evidence" value="ECO:0007669"/>
    <property type="project" value="UniProtKB-KW"/>
</dbReference>
<dbReference type="GO" id="GO:0050324">
    <property type="term" value="F:taurocyamine kinase activity"/>
    <property type="evidence" value="ECO:0007669"/>
    <property type="project" value="UniProtKB-EC"/>
</dbReference>
<dbReference type="InterPro" id="IPR022415">
    <property type="entry name" value="ATP-guanido_PTrfase_AS"/>
</dbReference>
<dbReference type="InterPro" id="IPR022414">
    <property type="entry name" value="ATP-guanido_PTrfase_cat"/>
</dbReference>
<dbReference type="InterPro" id="IPR014746">
    <property type="entry name" value="Gln_synth/guanido_kin_cat_dom"/>
</dbReference>
<dbReference type="Pfam" id="PF00217">
    <property type="entry name" value="ATP-gua_Ptrans"/>
    <property type="match status" value="1"/>
</dbReference>
<dbReference type="SUPFAM" id="SSF55931">
    <property type="entry name" value="Glutamine synthetase/guanido kinase"/>
    <property type="match status" value="1"/>
</dbReference>
<dbReference type="PROSITE" id="PS00112">
    <property type="entry name" value="PHOSPHAGEN_KINASE"/>
    <property type="match status" value="1"/>
</dbReference>
<dbReference type="PROSITE" id="PS51510">
    <property type="entry name" value="PHOSPHAGEN_KINASE_C"/>
    <property type="match status" value="1"/>
</dbReference>
<comment type="catalytic activity">
    <reaction>
        <text>taurocyamine + ATP = N-phosphotaurocyamine + ADP + H(+)</text>
        <dbReference type="Rhea" id="RHEA:22516"/>
        <dbReference type="ChEBI" id="CHEBI:15378"/>
        <dbReference type="ChEBI" id="CHEBI:30616"/>
        <dbReference type="ChEBI" id="CHEBI:57838"/>
        <dbReference type="ChEBI" id="CHEBI:58064"/>
        <dbReference type="ChEBI" id="CHEBI:456216"/>
        <dbReference type="EC" id="2.7.3.4"/>
    </reaction>
</comment>
<comment type="similarity">
    <text evidence="1">Belongs to the ATP:guanido phosphotransferase family.</text>
</comment>
<accession>P11917</accession>
<organism>
    <name type="scientific">Arenicola marina</name>
    <name type="common">Lugworm</name>
    <name type="synonym">Lumbricus marinus</name>
    <dbReference type="NCBI Taxonomy" id="6344"/>
    <lineage>
        <taxon>Eukaryota</taxon>
        <taxon>Metazoa</taxon>
        <taxon>Spiralia</taxon>
        <taxon>Lophotrochozoa</taxon>
        <taxon>Annelida</taxon>
        <taxon>Polychaeta</taxon>
        <taxon>Sedentaria</taxon>
        <taxon>Scolecida</taxon>
        <taxon>Arenicolidae</taxon>
        <taxon>Arenicola</taxon>
    </lineage>
</organism>
<proteinExistence type="evidence at protein level"/>
<keyword id="KW-0067">ATP-binding</keyword>
<keyword id="KW-0903">Direct protein sequencing</keyword>
<keyword id="KW-0418">Kinase</keyword>
<keyword id="KW-0547">Nucleotide-binding</keyword>
<keyword id="KW-0808">Transferase</keyword>